<dbReference type="EC" id="2.7.14.1" evidence="1"/>
<dbReference type="EMBL" id="BA000016">
    <property type="protein sequence ID" value="BAB82148.1"/>
    <property type="molecule type" value="Genomic_DNA"/>
</dbReference>
<dbReference type="RefSeq" id="WP_011010909.1">
    <property type="nucleotide sequence ID" value="NC_003366.1"/>
</dbReference>
<dbReference type="SMR" id="Q8XHP0"/>
<dbReference type="STRING" id="195102.gene:10491760"/>
<dbReference type="KEGG" id="cpe:CPE2442"/>
<dbReference type="HOGENOM" id="CLU_066591_1_0_9"/>
<dbReference type="Proteomes" id="UP000000818">
    <property type="component" value="Chromosome"/>
</dbReference>
<dbReference type="GO" id="GO:0005615">
    <property type="term" value="C:extracellular space"/>
    <property type="evidence" value="ECO:0007669"/>
    <property type="project" value="TreeGrafter"/>
</dbReference>
<dbReference type="GO" id="GO:0005524">
    <property type="term" value="F:ATP binding"/>
    <property type="evidence" value="ECO:0007669"/>
    <property type="project" value="UniProtKB-KW"/>
</dbReference>
<dbReference type="GO" id="GO:0004111">
    <property type="term" value="F:creatine kinase activity"/>
    <property type="evidence" value="ECO:0007669"/>
    <property type="project" value="InterPro"/>
</dbReference>
<dbReference type="GO" id="GO:0004672">
    <property type="term" value="F:protein kinase activity"/>
    <property type="evidence" value="ECO:0007669"/>
    <property type="project" value="UniProtKB-UniRule"/>
</dbReference>
<dbReference type="GO" id="GO:0046314">
    <property type="term" value="P:phosphocreatine biosynthetic process"/>
    <property type="evidence" value="ECO:0007669"/>
    <property type="project" value="InterPro"/>
</dbReference>
<dbReference type="CDD" id="cd07930">
    <property type="entry name" value="bacterial_phosphagen_kinase"/>
    <property type="match status" value="1"/>
</dbReference>
<dbReference type="Gene3D" id="3.30.590.10">
    <property type="entry name" value="Glutamine synthetase/guanido kinase, catalytic domain"/>
    <property type="match status" value="1"/>
</dbReference>
<dbReference type="HAMAP" id="MF_00602">
    <property type="entry name" value="Prot_Arg_kinase"/>
    <property type="match status" value="1"/>
</dbReference>
<dbReference type="InterPro" id="IPR023660">
    <property type="entry name" value="Arg_Kinase"/>
</dbReference>
<dbReference type="InterPro" id="IPR000749">
    <property type="entry name" value="ATP-guanido_PTrfase"/>
</dbReference>
<dbReference type="InterPro" id="IPR022414">
    <property type="entry name" value="ATP-guanido_PTrfase_cat"/>
</dbReference>
<dbReference type="InterPro" id="IPR014746">
    <property type="entry name" value="Gln_synth/guanido_kin_cat_dom"/>
</dbReference>
<dbReference type="NCBIfam" id="NF002191">
    <property type="entry name" value="PRK01059.1-1"/>
    <property type="match status" value="1"/>
</dbReference>
<dbReference type="PANTHER" id="PTHR11547:SF38">
    <property type="entry name" value="ARGININE KINASE 1-RELATED"/>
    <property type="match status" value="1"/>
</dbReference>
<dbReference type="PANTHER" id="PTHR11547">
    <property type="entry name" value="ARGININE OR CREATINE KINASE"/>
    <property type="match status" value="1"/>
</dbReference>
<dbReference type="Pfam" id="PF00217">
    <property type="entry name" value="ATP-gua_Ptrans"/>
    <property type="match status" value="1"/>
</dbReference>
<dbReference type="SUPFAM" id="SSF55931">
    <property type="entry name" value="Glutamine synthetase/guanido kinase"/>
    <property type="match status" value="1"/>
</dbReference>
<dbReference type="PROSITE" id="PS51510">
    <property type="entry name" value="PHOSPHAGEN_KINASE_C"/>
    <property type="match status" value="1"/>
</dbReference>
<organism>
    <name type="scientific">Clostridium perfringens (strain 13 / Type A)</name>
    <dbReference type="NCBI Taxonomy" id="195102"/>
    <lineage>
        <taxon>Bacteria</taxon>
        <taxon>Bacillati</taxon>
        <taxon>Bacillota</taxon>
        <taxon>Clostridia</taxon>
        <taxon>Eubacteriales</taxon>
        <taxon>Clostridiaceae</taxon>
        <taxon>Clostridium</taxon>
    </lineage>
</organism>
<feature type="chain" id="PRO_0000212022" description="Protein-arginine kinase">
    <location>
        <begin position="1"/>
        <end position="337"/>
    </location>
</feature>
<feature type="domain" description="Phosphagen kinase C-terminal" evidence="1">
    <location>
        <begin position="12"/>
        <end position="240"/>
    </location>
</feature>
<feature type="binding site" evidence="1">
    <location>
        <begin position="15"/>
        <end position="19"/>
    </location>
    <ligand>
        <name>ATP</name>
        <dbReference type="ChEBI" id="CHEBI:30616"/>
    </ligand>
</feature>
<feature type="binding site" evidence="1">
    <location>
        <begin position="162"/>
        <end position="166"/>
    </location>
    <ligand>
        <name>ATP</name>
        <dbReference type="ChEBI" id="CHEBI:30616"/>
    </ligand>
</feature>
<feature type="binding site" evidence="1">
    <location>
        <begin position="193"/>
        <end position="198"/>
    </location>
    <ligand>
        <name>ATP</name>
        <dbReference type="ChEBI" id="CHEBI:30616"/>
    </ligand>
</feature>
<proteinExistence type="inferred from homology"/>
<sequence>MVQWISPLDNSIVIASKVKILRNIKGIKFTKLLNEEEFNDLLSMVLGRLKEIDILDKCYVVKLKDGEEKIIDYYKENFGLIKYFENKDNLIFIMNKNGEFNILLNEEEHIGIECTNSGLSLREVYSKVDKLDDLIEEKIHYSFDSELGYLTSNIKNLGTALRTKVFIHLPLLSSNNLIRIIKNALKEEGITLKSIYNSGNKDVGNIYEVSNIKTLGMSEKDILDSLISITNKLILREKNQRDNLSKDEYIELKDDILRALGVLRNTYSIDRDEALKYLSYVRLGVELGIIEDLTLKPVNSAMIEIQPDMINNSSIKRRDIQSLKIERAKIIRNALNT</sequence>
<evidence type="ECO:0000255" key="1">
    <source>
        <dbReference type="HAMAP-Rule" id="MF_00602"/>
    </source>
</evidence>
<keyword id="KW-0067">ATP-binding</keyword>
<keyword id="KW-0418">Kinase</keyword>
<keyword id="KW-0547">Nucleotide-binding</keyword>
<keyword id="KW-1185">Reference proteome</keyword>
<keyword id="KW-0808">Transferase</keyword>
<gene>
    <name evidence="1" type="primary">mcsB</name>
    <name type="ordered locus">CPE2442</name>
</gene>
<protein>
    <recommendedName>
        <fullName evidence="1">Protein-arginine kinase</fullName>
        <ecNumber evidence="1">2.7.14.1</ecNumber>
    </recommendedName>
</protein>
<comment type="function">
    <text evidence="1">Catalyzes the specific phosphorylation of arginine residues in proteins.</text>
</comment>
<comment type="catalytic activity">
    <reaction evidence="1">
        <text>L-arginyl-[protein] + ATP = N(omega)-phospho-L-arginyl-[protein] + ADP + H(+)</text>
        <dbReference type="Rhea" id="RHEA:43384"/>
        <dbReference type="Rhea" id="RHEA-COMP:10532"/>
        <dbReference type="Rhea" id="RHEA-COMP:10533"/>
        <dbReference type="ChEBI" id="CHEBI:15378"/>
        <dbReference type="ChEBI" id="CHEBI:29965"/>
        <dbReference type="ChEBI" id="CHEBI:30616"/>
        <dbReference type="ChEBI" id="CHEBI:83226"/>
        <dbReference type="ChEBI" id="CHEBI:456216"/>
        <dbReference type="EC" id="2.7.14.1"/>
    </reaction>
</comment>
<comment type="similarity">
    <text evidence="1">Belongs to the ATP:guanido phosphotransferase family.</text>
</comment>
<accession>Q8XHP0</accession>
<reference key="1">
    <citation type="journal article" date="2002" name="Proc. Natl. Acad. Sci. U.S.A.">
        <title>Complete genome sequence of Clostridium perfringens, an anaerobic flesh-eater.</title>
        <authorList>
            <person name="Shimizu T."/>
            <person name="Ohtani K."/>
            <person name="Hirakawa H."/>
            <person name="Ohshima K."/>
            <person name="Yamashita A."/>
            <person name="Shiba T."/>
            <person name="Ogasawara N."/>
            <person name="Hattori M."/>
            <person name="Kuhara S."/>
            <person name="Hayashi H."/>
        </authorList>
    </citation>
    <scope>NUCLEOTIDE SEQUENCE [LARGE SCALE GENOMIC DNA]</scope>
    <source>
        <strain>13 / Type A</strain>
    </source>
</reference>
<name>MCSB_CLOPE</name>